<keyword id="KW-0169">Cobalamin biosynthesis</keyword>
<keyword id="KW-0328">Glycosyltransferase</keyword>
<keyword id="KW-0808">Transferase</keyword>
<organism>
    <name type="scientific">Shewanella piezotolerans (strain WP3 / JCM 13877)</name>
    <dbReference type="NCBI Taxonomy" id="225849"/>
    <lineage>
        <taxon>Bacteria</taxon>
        <taxon>Pseudomonadati</taxon>
        <taxon>Pseudomonadota</taxon>
        <taxon>Gammaproteobacteria</taxon>
        <taxon>Alteromonadales</taxon>
        <taxon>Shewanellaceae</taxon>
        <taxon>Shewanella</taxon>
    </lineage>
</organism>
<gene>
    <name evidence="1" type="primary">cobT</name>
    <name type="ordered locus">swp_0996</name>
</gene>
<proteinExistence type="inferred from homology"/>
<accession>B8CJ37</accession>
<feature type="chain" id="PRO_1000118972" description="Nicotinate-nucleotide--dimethylbenzimidazole phosphoribosyltransferase">
    <location>
        <begin position="1"/>
        <end position="342"/>
    </location>
</feature>
<feature type="active site" description="Proton acceptor" evidence="1">
    <location>
        <position position="311"/>
    </location>
</feature>
<evidence type="ECO:0000255" key="1">
    <source>
        <dbReference type="HAMAP-Rule" id="MF_00230"/>
    </source>
</evidence>
<reference key="1">
    <citation type="journal article" date="2008" name="PLoS ONE">
        <title>Environmental adaptation: genomic analysis of the piezotolerant and psychrotolerant deep-sea iron reducing bacterium Shewanella piezotolerans WP3.</title>
        <authorList>
            <person name="Wang F."/>
            <person name="Wang J."/>
            <person name="Jian H."/>
            <person name="Zhang B."/>
            <person name="Li S."/>
            <person name="Wang F."/>
            <person name="Zeng X."/>
            <person name="Gao L."/>
            <person name="Bartlett D.H."/>
            <person name="Yu J."/>
            <person name="Hu S."/>
            <person name="Xiao X."/>
        </authorList>
    </citation>
    <scope>NUCLEOTIDE SEQUENCE [LARGE SCALE GENOMIC DNA]</scope>
    <source>
        <strain>WP3 / JCM 13877</strain>
    </source>
</reference>
<comment type="function">
    <text evidence="1">Catalyzes the synthesis of alpha-ribazole-5'-phosphate from nicotinate mononucleotide (NAMN) and 5,6-dimethylbenzimidazole (DMB).</text>
</comment>
<comment type="catalytic activity">
    <reaction evidence="1">
        <text>5,6-dimethylbenzimidazole + nicotinate beta-D-ribonucleotide = alpha-ribazole 5'-phosphate + nicotinate + H(+)</text>
        <dbReference type="Rhea" id="RHEA:11196"/>
        <dbReference type="ChEBI" id="CHEBI:15378"/>
        <dbReference type="ChEBI" id="CHEBI:15890"/>
        <dbReference type="ChEBI" id="CHEBI:32544"/>
        <dbReference type="ChEBI" id="CHEBI:57502"/>
        <dbReference type="ChEBI" id="CHEBI:57918"/>
        <dbReference type="EC" id="2.4.2.21"/>
    </reaction>
</comment>
<comment type="pathway">
    <text evidence="1">Nucleoside biosynthesis; alpha-ribazole biosynthesis; alpha-ribazole from 5,6-dimethylbenzimidazole: step 1/2.</text>
</comment>
<comment type="similarity">
    <text evidence="1">Belongs to the CobT family.</text>
</comment>
<name>COBT_SHEPW</name>
<dbReference type="EC" id="2.4.2.21" evidence="1"/>
<dbReference type="EMBL" id="CP000472">
    <property type="protein sequence ID" value="ACJ27799.1"/>
    <property type="molecule type" value="Genomic_DNA"/>
</dbReference>
<dbReference type="RefSeq" id="WP_020911177.1">
    <property type="nucleotide sequence ID" value="NC_011566.1"/>
</dbReference>
<dbReference type="SMR" id="B8CJ37"/>
<dbReference type="STRING" id="225849.swp_0996"/>
<dbReference type="KEGG" id="swp:swp_0996"/>
<dbReference type="eggNOG" id="COG2038">
    <property type="taxonomic scope" value="Bacteria"/>
</dbReference>
<dbReference type="HOGENOM" id="CLU_002982_0_0_6"/>
<dbReference type="OrthoDB" id="9781491at2"/>
<dbReference type="UniPathway" id="UPA00061">
    <property type="reaction ID" value="UER00516"/>
</dbReference>
<dbReference type="Proteomes" id="UP000000753">
    <property type="component" value="Chromosome"/>
</dbReference>
<dbReference type="GO" id="GO:0008939">
    <property type="term" value="F:nicotinate-nucleotide-dimethylbenzimidazole phosphoribosyltransferase activity"/>
    <property type="evidence" value="ECO:0007669"/>
    <property type="project" value="UniProtKB-UniRule"/>
</dbReference>
<dbReference type="GO" id="GO:0009236">
    <property type="term" value="P:cobalamin biosynthetic process"/>
    <property type="evidence" value="ECO:0007669"/>
    <property type="project" value="UniProtKB-KW"/>
</dbReference>
<dbReference type="CDD" id="cd02439">
    <property type="entry name" value="DMB-PRT_CobT"/>
    <property type="match status" value="1"/>
</dbReference>
<dbReference type="FunFam" id="3.40.50.10210:FF:000001">
    <property type="entry name" value="Nicotinate-nucleotide--dimethylbenzimidazole phosphoribosyltransferase"/>
    <property type="match status" value="1"/>
</dbReference>
<dbReference type="Gene3D" id="1.10.1610.10">
    <property type="match status" value="1"/>
</dbReference>
<dbReference type="Gene3D" id="3.40.50.10210">
    <property type="match status" value="1"/>
</dbReference>
<dbReference type="HAMAP" id="MF_00230">
    <property type="entry name" value="CobT"/>
    <property type="match status" value="1"/>
</dbReference>
<dbReference type="InterPro" id="IPR003200">
    <property type="entry name" value="Nict_dMeBzImd_PRibTrfase"/>
</dbReference>
<dbReference type="InterPro" id="IPR017846">
    <property type="entry name" value="Nict_dMeBzImd_PRibTrfase_bact"/>
</dbReference>
<dbReference type="InterPro" id="IPR023195">
    <property type="entry name" value="Nict_dMeBzImd_PRibTrfase_N"/>
</dbReference>
<dbReference type="InterPro" id="IPR036087">
    <property type="entry name" value="Nict_dMeBzImd_PRibTrfase_sf"/>
</dbReference>
<dbReference type="NCBIfam" id="TIGR03160">
    <property type="entry name" value="cobT_DBIPRT"/>
    <property type="match status" value="1"/>
</dbReference>
<dbReference type="NCBIfam" id="NF000996">
    <property type="entry name" value="PRK00105.1"/>
    <property type="match status" value="1"/>
</dbReference>
<dbReference type="PANTHER" id="PTHR43463">
    <property type="entry name" value="NICOTINATE-NUCLEOTIDE--DIMETHYLBENZIMIDAZOLE PHOSPHORIBOSYLTRANSFERASE"/>
    <property type="match status" value="1"/>
</dbReference>
<dbReference type="PANTHER" id="PTHR43463:SF1">
    <property type="entry name" value="NICOTINATE-NUCLEOTIDE--DIMETHYLBENZIMIDAZOLE PHOSPHORIBOSYLTRANSFERASE"/>
    <property type="match status" value="1"/>
</dbReference>
<dbReference type="Pfam" id="PF02277">
    <property type="entry name" value="DBI_PRT"/>
    <property type="match status" value="1"/>
</dbReference>
<dbReference type="SUPFAM" id="SSF52733">
    <property type="entry name" value="Nicotinate mononucleotide:5,6-dimethylbenzimidazole phosphoribosyltransferase (CobT)"/>
    <property type="match status" value="1"/>
</dbReference>
<protein>
    <recommendedName>
        <fullName evidence="1">Nicotinate-nucleotide--dimethylbenzimidazole phosphoribosyltransferase</fullName>
        <shortName evidence="1">NN:DBI PRT</shortName>
        <ecNumber evidence="1">2.4.2.21</ecNumber>
    </recommendedName>
    <alternativeName>
        <fullName evidence="1">N(1)-alpha-phosphoribosyltransferase</fullName>
    </alternativeName>
</protein>
<sequence length="342" mass="36142">MFNIKPLSSEFEEAIQQKIDTKTKPLGALGDLEGLALQIAKVLGKDNPQINNPKMMVFAADHGIASSGVSIAPSEVTAQMVRNFMAGGAAINVFTRQVGLELEVIDCGVLQPFDSDSGVIDQRLGAGTGPIHKRAAMTLGAVKQGFEMAADRIQLHHQNGCNLIALGEMGIGNTSSAAAIMSVLTGVAASDCVGRGTGIDAATFKRKQMLIEQAVLLHHSELDDPMQVLACIGGFEIVQMTGAILAAAERGMLVVIDGFIASAAALVAVNINSHCRDYMIFSHQSDEKGHYLMLEYMQAKPLLNLGLKLGEGTGAALAFPLIQAAVNFYNQMASFEDAGIEI</sequence>